<keyword id="KW-0227">DNA damage</keyword>
<keyword id="KW-0234">DNA repair</keyword>
<keyword id="KW-0238">DNA-binding</keyword>
<keyword id="KW-0326">Glycosidase</keyword>
<keyword id="KW-0378">Hydrolase</keyword>
<keyword id="KW-0456">Lyase</keyword>
<keyword id="KW-0479">Metal-binding</keyword>
<keyword id="KW-0511">Multifunctional enzyme</keyword>
<keyword id="KW-1185">Reference proteome</keyword>
<keyword id="KW-0862">Zinc</keyword>
<keyword id="KW-0863">Zinc-finger</keyword>
<gene>
    <name evidence="2" type="primary">mutM</name>
    <name evidence="2" type="synonym">fpg</name>
    <name type="ordered locus">cce_4324</name>
</gene>
<sequence>MPELPEVETVCRGLNQLTFGQTIRGGKVLLPRTLAYPVSIEEFLEQINNATFGQWQRRGKYLLVPLEEKKGWLGVHLRMTGQLLWVKQNEPLSRHTRLRLFCDRSKELRFVDIRTFGKVWWVPPNQPPETIITGLQKLGLEPFSNAFSLDYFIDKLKGRQRNIKTILLDQSVVAGIGNIYADEALFKSGIRPTTLGKELSQPQVKRLREAMIEVLKTAIEEGGTTFSDFRGVTGINGNYSGVAWVYGRHNQPCRVCGTPIERIKLGGRSSHFCPQCQPLGNKK</sequence>
<name>FPG_CROS5</name>
<feature type="initiator methionine" description="Removed" evidence="1">
    <location>
        <position position="1"/>
    </location>
</feature>
<feature type="chain" id="PRO_1000094041" description="Formamidopyrimidine-DNA glycosylase">
    <location>
        <begin position="2"/>
        <end position="283"/>
    </location>
</feature>
<feature type="zinc finger region" description="FPG-type" evidence="2">
    <location>
        <begin position="244"/>
        <end position="278"/>
    </location>
</feature>
<feature type="active site" description="Schiff-base intermediate with DNA" evidence="2">
    <location>
        <position position="2"/>
    </location>
</feature>
<feature type="active site" description="Proton donor" evidence="2">
    <location>
        <position position="3"/>
    </location>
</feature>
<feature type="active site" description="Proton donor; for beta-elimination activity" evidence="2">
    <location>
        <position position="60"/>
    </location>
</feature>
<feature type="active site" description="Proton donor; for delta-elimination activity" evidence="2">
    <location>
        <position position="268"/>
    </location>
</feature>
<feature type="binding site" evidence="2">
    <location>
        <position position="95"/>
    </location>
    <ligand>
        <name>DNA</name>
        <dbReference type="ChEBI" id="CHEBI:16991"/>
    </ligand>
</feature>
<feature type="binding site" evidence="2">
    <location>
        <position position="114"/>
    </location>
    <ligand>
        <name>DNA</name>
        <dbReference type="ChEBI" id="CHEBI:16991"/>
    </ligand>
</feature>
<feature type="binding site" evidence="2">
    <location>
        <position position="159"/>
    </location>
    <ligand>
        <name>DNA</name>
        <dbReference type="ChEBI" id="CHEBI:16991"/>
    </ligand>
</feature>
<reference key="1">
    <citation type="journal article" date="2008" name="Proc. Natl. Acad. Sci. U.S.A.">
        <title>The genome of Cyanothece 51142, a unicellular diazotrophic cyanobacterium important in the marine nitrogen cycle.</title>
        <authorList>
            <person name="Welsh E.A."/>
            <person name="Liberton M."/>
            <person name="Stoeckel J."/>
            <person name="Loh T."/>
            <person name="Elvitigala T."/>
            <person name="Wang C."/>
            <person name="Wollam A."/>
            <person name="Fulton R.S."/>
            <person name="Clifton S.W."/>
            <person name="Jacobs J.M."/>
            <person name="Aurora R."/>
            <person name="Ghosh B.K."/>
            <person name="Sherman L.A."/>
            <person name="Smith R.D."/>
            <person name="Wilson R.K."/>
            <person name="Pakrasi H.B."/>
        </authorList>
    </citation>
    <scope>NUCLEOTIDE SEQUENCE [LARGE SCALE GENOMIC DNA]</scope>
    <source>
        <strain>ATCC 51142 / BH68</strain>
    </source>
</reference>
<evidence type="ECO:0000250" key="1"/>
<evidence type="ECO:0000255" key="2">
    <source>
        <dbReference type="HAMAP-Rule" id="MF_00103"/>
    </source>
</evidence>
<dbReference type="EC" id="3.2.2.23" evidence="2"/>
<dbReference type="EC" id="4.2.99.18" evidence="2"/>
<dbReference type="EMBL" id="CP000806">
    <property type="protein sequence ID" value="ACB53672.1"/>
    <property type="molecule type" value="Genomic_DNA"/>
</dbReference>
<dbReference type="RefSeq" id="WP_009543614.1">
    <property type="nucleotide sequence ID" value="NC_010546.1"/>
</dbReference>
<dbReference type="SMR" id="B1WTF7"/>
<dbReference type="STRING" id="43989.cce_4324"/>
<dbReference type="KEGG" id="cyt:cce_4324"/>
<dbReference type="eggNOG" id="COG0266">
    <property type="taxonomic scope" value="Bacteria"/>
</dbReference>
<dbReference type="HOGENOM" id="CLU_038423_1_2_3"/>
<dbReference type="OrthoDB" id="9800855at2"/>
<dbReference type="Proteomes" id="UP000001203">
    <property type="component" value="Chromosome circular"/>
</dbReference>
<dbReference type="GO" id="GO:0034039">
    <property type="term" value="F:8-oxo-7,8-dihydroguanine DNA N-glycosylase activity"/>
    <property type="evidence" value="ECO:0007669"/>
    <property type="project" value="TreeGrafter"/>
</dbReference>
<dbReference type="GO" id="GO:0140078">
    <property type="term" value="F:class I DNA-(apurinic or apyrimidinic site) endonuclease activity"/>
    <property type="evidence" value="ECO:0007669"/>
    <property type="project" value="UniProtKB-EC"/>
</dbReference>
<dbReference type="GO" id="GO:0003684">
    <property type="term" value="F:damaged DNA binding"/>
    <property type="evidence" value="ECO:0007669"/>
    <property type="project" value="InterPro"/>
</dbReference>
<dbReference type="GO" id="GO:0008270">
    <property type="term" value="F:zinc ion binding"/>
    <property type="evidence" value="ECO:0007669"/>
    <property type="project" value="UniProtKB-UniRule"/>
</dbReference>
<dbReference type="GO" id="GO:0006284">
    <property type="term" value="P:base-excision repair"/>
    <property type="evidence" value="ECO:0007669"/>
    <property type="project" value="InterPro"/>
</dbReference>
<dbReference type="CDD" id="cd08966">
    <property type="entry name" value="EcFpg-like_N"/>
    <property type="match status" value="1"/>
</dbReference>
<dbReference type="FunFam" id="1.10.8.50:FF:000003">
    <property type="entry name" value="Formamidopyrimidine-DNA glycosylase"/>
    <property type="match status" value="1"/>
</dbReference>
<dbReference type="Gene3D" id="1.10.8.50">
    <property type="match status" value="1"/>
</dbReference>
<dbReference type="Gene3D" id="3.20.190.10">
    <property type="entry name" value="MutM-like, N-terminal"/>
    <property type="match status" value="1"/>
</dbReference>
<dbReference type="HAMAP" id="MF_00103">
    <property type="entry name" value="Fapy_DNA_glycosyl"/>
    <property type="match status" value="1"/>
</dbReference>
<dbReference type="InterPro" id="IPR015886">
    <property type="entry name" value="DNA_glyclase/AP_lyase_DNA-bd"/>
</dbReference>
<dbReference type="InterPro" id="IPR015887">
    <property type="entry name" value="DNA_glyclase_Znf_dom_DNA_BS"/>
</dbReference>
<dbReference type="InterPro" id="IPR020629">
    <property type="entry name" value="Formamido-pyr_DNA_Glyclase"/>
</dbReference>
<dbReference type="InterPro" id="IPR012319">
    <property type="entry name" value="FPG_cat"/>
</dbReference>
<dbReference type="InterPro" id="IPR035937">
    <property type="entry name" value="MutM-like_N-ter"/>
</dbReference>
<dbReference type="InterPro" id="IPR010979">
    <property type="entry name" value="Ribosomal_uS13-like_H2TH"/>
</dbReference>
<dbReference type="InterPro" id="IPR000214">
    <property type="entry name" value="Znf_DNA_glyclase/AP_lyase"/>
</dbReference>
<dbReference type="InterPro" id="IPR010663">
    <property type="entry name" value="Znf_FPG/IleRS"/>
</dbReference>
<dbReference type="NCBIfam" id="TIGR00577">
    <property type="entry name" value="fpg"/>
    <property type="match status" value="1"/>
</dbReference>
<dbReference type="NCBIfam" id="NF002211">
    <property type="entry name" value="PRK01103.1"/>
    <property type="match status" value="1"/>
</dbReference>
<dbReference type="NCBIfam" id="NF010551">
    <property type="entry name" value="PRK13945.1"/>
    <property type="match status" value="1"/>
</dbReference>
<dbReference type="PANTHER" id="PTHR22993">
    <property type="entry name" value="FORMAMIDOPYRIMIDINE-DNA GLYCOSYLASE"/>
    <property type="match status" value="1"/>
</dbReference>
<dbReference type="PANTHER" id="PTHR22993:SF9">
    <property type="entry name" value="FORMAMIDOPYRIMIDINE-DNA GLYCOSYLASE"/>
    <property type="match status" value="1"/>
</dbReference>
<dbReference type="Pfam" id="PF01149">
    <property type="entry name" value="Fapy_DNA_glyco"/>
    <property type="match status" value="1"/>
</dbReference>
<dbReference type="Pfam" id="PF06831">
    <property type="entry name" value="H2TH"/>
    <property type="match status" value="1"/>
</dbReference>
<dbReference type="Pfam" id="PF06827">
    <property type="entry name" value="zf-FPG_IleRS"/>
    <property type="match status" value="1"/>
</dbReference>
<dbReference type="SMART" id="SM00898">
    <property type="entry name" value="Fapy_DNA_glyco"/>
    <property type="match status" value="1"/>
</dbReference>
<dbReference type="SMART" id="SM01232">
    <property type="entry name" value="H2TH"/>
    <property type="match status" value="1"/>
</dbReference>
<dbReference type="SUPFAM" id="SSF57716">
    <property type="entry name" value="Glucocorticoid receptor-like (DNA-binding domain)"/>
    <property type="match status" value="1"/>
</dbReference>
<dbReference type="SUPFAM" id="SSF81624">
    <property type="entry name" value="N-terminal domain of MutM-like DNA repair proteins"/>
    <property type="match status" value="1"/>
</dbReference>
<dbReference type="SUPFAM" id="SSF46946">
    <property type="entry name" value="S13-like H2TH domain"/>
    <property type="match status" value="1"/>
</dbReference>
<dbReference type="PROSITE" id="PS51068">
    <property type="entry name" value="FPG_CAT"/>
    <property type="match status" value="1"/>
</dbReference>
<dbReference type="PROSITE" id="PS01242">
    <property type="entry name" value="ZF_FPG_1"/>
    <property type="match status" value="1"/>
</dbReference>
<dbReference type="PROSITE" id="PS51066">
    <property type="entry name" value="ZF_FPG_2"/>
    <property type="match status" value="1"/>
</dbReference>
<proteinExistence type="inferred from homology"/>
<accession>B1WTF7</accession>
<comment type="function">
    <text evidence="2">Involved in base excision repair of DNA damaged by oxidation or by mutagenic agents. Acts as a DNA glycosylase that recognizes and removes damaged bases. Has a preference for oxidized purines, such as 7,8-dihydro-8-oxoguanine (8-oxoG). Has AP (apurinic/apyrimidinic) lyase activity and introduces nicks in the DNA strand. Cleaves the DNA backbone by beta-delta elimination to generate a single-strand break at the site of the removed base with both 3'- and 5'-phosphates.</text>
</comment>
<comment type="catalytic activity">
    <reaction evidence="2">
        <text>Hydrolysis of DNA containing ring-opened 7-methylguanine residues, releasing 2,6-diamino-4-hydroxy-5-(N-methyl)formamidopyrimidine.</text>
        <dbReference type="EC" id="3.2.2.23"/>
    </reaction>
</comment>
<comment type="catalytic activity">
    <reaction evidence="2">
        <text>2'-deoxyribonucleotide-(2'-deoxyribose 5'-phosphate)-2'-deoxyribonucleotide-DNA = a 3'-end 2'-deoxyribonucleotide-(2,3-dehydro-2,3-deoxyribose 5'-phosphate)-DNA + a 5'-end 5'-phospho-2'-deoxyribonucleoside-DNA + H(+)</text>
        <dbReference type="Rhea" id="RHEA:66592"/>
        <dbReference type="Rhea" id="RHEA-COMP:13180"/>
        <dbReference type="Rhea" id="RHEA-COMP:16897"/>
        <dbReference type="Rhea" id="RHEA-COMP:17067"/>
        <dbReference type="ChEBI" id="CHEBI:15378"/>
        <dbReference type="ChEBI" id="CHEBI:136412"/>
        <dbReference type="ChEBI" id="CHEBI:157695"/>
        <dbReference type="ChEBI" id="CHEBI:167181"/>
        <dbReference type="EC" id="4.2.99.18"/>
    </reaction>
</comment>
<comment type="cofactor">
    <cofactor evidence="2">
        <name>Zn(2+)</name>
        <dbReference type="ChEBI" id="CHEBI:29105"/>
    </cofactor>
    <text evidence="2">Binds 1 zinc ion per subunit.</text>
</comment>
<comment type="subunit">
    <text evidence="2">Monomer.</text>
</comment>
<comment type="similarity">
    <text evidence="2">Belongs to the FPG family.</text>
</comment>
<protein>
    <recommendedName>
        <fullName evidence="2">Formamidopyrimidine-DNA glycosylase</fullName>
        <shortName evidence="2">Fapy-DNA glycosylase</shortName>
        <ecNumber evidence="2">3.2.2.23</ecNumber>
    </recommendedName>
    <alternativeName>
        <fullName evidence="2">DNA-(apurinic or apyrimidinic site) lyase MutM</fullName>
        <shortName evidence="2">AP lyase MutM</shortName>
        <ecNumber evidence="2">4.2.99.18</ecNumber>
    </alternativeName>
</protein>
<organism>
    <name type="scientific">Crocosphaera subtropica (strain ATCC 51142 / BH68)</name>
    <name type="common">Cyanothece sp. (strain ATCC 51142)</name>
    <dbReference type="NCBI Taxonomy" id="43989"/>
    <lineage>
        <taxon>Bacteria</taxon>
        <taxon>Bacillati</taxon>
        <taxon>Cyanobacteriota</taxon>
        <taxon>Cyanophyceae</taxon>
        <taxon>Oscillatoriophycideae</taxon>
        <taxon>Chroococcales</taxon>
        <taxon>Aphanothecaceae</taxon>
        <taxon>Crocosphaera</taxon>
        <taxon>Crocosphaera subtropica</taxon>
    </lineage>
</organism>